<keyword id="KW-0066">ATP synthesis</keyword>
<keyword id="KW-0997">Cell inner membrane</keyword>
<keyword id="KW-1003">Cell membrane</keyword>
<keyword id="KW-0138">CF(0)</keyword>
<keyword id="KW-0375">Hydrogen ion transport</keyword>
<keyword id="KW-0406">Ion transport</keyword>
<keyword id="KW-0472">Membrane</keyword>
<keyword id="KW-0812">Transmembrane</keyword>
<keyword id="KW-1133">Transmembrane helix</keyword>
<keyword id="KW-0813">Transport</keyword>
<accession>Q5HTR0</accession>
<sequence length="226" mass="25029">MKDLFLFSSLLDASHTFSYFFHIGLVALIAVIVAMMATRSMQLVPRGMQNLGEAFLEGVLSMGRDTMGSEKGARKYLPLVATLGIIVFFSNIIGIIPGFHSPTASLNLTLSLAIIVFVYYHFEGIRAQGFVKYFAHFMGPIKLLAPLMFPIEIVSHLSRVVSLSFRLFGNIKGDDLFLMVILALVPYIAPLPAYVLLTFMAFLQAFIFMILTYVYLAGATVVEEGH</sequence>
<protein>
    <recommendedName>
        <fullName evidence="1">ATP synthase subunit a</fullName>
    </recommendedName>
    <alternativeName>
        <fullName evidence="1">ATP synthase F0 sector subunit a</fullName>
    </alternativeName>
    <alternativeName>
        <fullName evidence="1">F-ATPase subunit 6</fullName>
    </alternativeName>
</protein>
<reference key="1">
    <citation type="journal article" date="2005" name="PLoS Biol.">
        <title>Major structural differences and novel potential virulence mechanisms from the genomes of multiple Campylobacter species.</title>
        <authorList>
            <person name="Fouts D.E."/>
            <person name="Mongodin E.F."/>
            <person name="Mandrell R.E."/>
            <person name="Miller W.G."/>
            <person name="Rasko D.A."/>
            <person name="Ravel J."/>
            <person name="Brinkac L.M."/>
            <person name="DeBoy R.T."/>
            <person name="Parker C.T."/>
            <person name="Daugherty S.C."/>
            <person name="Dodson R.J."/>
            <person name="Durkin A.S."/>
            <person name="Madupu R."/>
            <person name="Sullivan S.A."/>
            <person name="Shetty J.U."/>
            <person name="Ayodeji M.A."/>
            <person name="Shvartsbeyn A."/>
            <person name="Schatz M.C."/>
            <person name="Badger J.H."/>
            <person name="Fraser C.M."/>
            <person name="Nelson K.E."/>
        </authorList>
    </citation>
    <scope>NUCLEOTIDE SEQUENCE [LARGE SCALE GENOMIC DNA]</scope>
    <source>
        <strain>RM1221</strain>
    </source>
</reference>
<comment type="function">
    <text evidence="1">Key component of the proton channel; it plays a direct role in the translocation of protons across the membrane.</text>
</comment>
<comment type="subunit">
    <text evidence="1">F-type ATPases have 2 components, CF(1) - the catalytic core - and CF(0) - the membrane proton channel. CF(1) has five subunits: alpha(3), beta(3), gamma(1), delta(1), epsilon(1). CF(0) has three main subunits: a(1), b(2) and c(9-12). The alpha and beta chains form an alternating ring which encloses part of the gamma chain. CF(1) is attached to CF(0) by a central stalk formed by the gamma and epsilon chains, while a peripheral stalk is formed by the delta and b chains.</text>
</comment>
<comment type="subcellular location">
    <subcellularLocation>
        <location evidence="1">Cell inner membrane</location>
        <topology evidence="1">Multi-pass membrane protein</topology>
    </subcellularLocation>
</comment>
<comment type="similarity">
    <text evidence="1">Belongs to the ATPase A chain family.</text>
</comment>
<gene>
    <name evidence="1" type="primary">atpB</name>
    <name type="ordered locus">CJE1338</name>
</gene>
<organism>
    <name type="scientific">Campylobacter jejuni (strain RM1221)</name>
    <dbReference type="NCBI Taxonomy" id="195099"/>
    <lineage>
        <taxon>Bacteria</taxon>
        <taxon>Pseudomonadati</taxon>
        <taxon>Campylobacterota</taxon>
        <taxon>Epsilonproteobacteria</taxon>
        <taxon>Campylobacterales</taxon>
        <taxon>Campylobacteraceae</taxon>
        <taxon>Campylobacter</taxon>
    </lineage>
</organism>
<feature type="chain" id="PRO_0000362265" description="ATP synthase subunit a">
    <location>
        <begin position="1"/>
        <end position="226"/>
    </location>
</feature>
<feature type="transmembrane region" description="Helical" evidence="1">
    <location>
        <begin position="17"/>
        <end position="37"/>
    </location>
</feature>
<feature type="transmembrane region" description="Helical" evidence="1">
    <location>
        <begin position="79"/>
        <end position="99"/>
    </location>
</feature>
<feature type="transmembrane region" description="Helical" evidence="1">
    <location>
        <begin position="105"/>
        <end position="125"/>
    </location>
</feature>
<feature type="transmembrane region" description="Helical" evidence="1">
    <location>
        <begin position="134"/>
        <end position="154"/>
    </location>
</feature>
<feature type="transmembrane region" description="Helical" evidence="1">
    <location>
        <begin position="176"/>
        <end position="196"/>
    </location>
</feature>
<feature type="transmembrane region" description="Helical" evidence="1">
    <location>
        <begin position="199"/>
        <end position="219"/>
    </location>
</feature>
<name>ATP6_CAMJR</name>
<dbReference type="EMBL" id="CP000025">
    <property type="protein sequence ID" value="AAW35659.1"/>
    <property type="molecule type" value="Genomic_DNA"/>
</dbReference>
<dbReference type="RefSeq" id="WP_002852750.1">
    <property type="nucleotide sequence ID" value="NC_003912.7"/>
</dbReference>
<dbReference type="SMR" id="Q5HTR0"/>
<dbReference type="KEGG" id="cjr:CJE1338"/>
<dbReference type="HOGENOM" id="CLU_041018_2_2_7"/>
<dbReference type="GO" id="GO:0005886">
    <property type="term" value="C:plasma membrane"/>
    <property type="evidence" value="ECO:0007669"/>
    <property type="project" value="UniProtKB-SubCell"/>
</dbReference>
<dbReference type="GO" id="GO:0045259">
    <property type="term" value="C:proton-transporting ATP synthase complex"/>
    <property type="evidence" value="ECO:0007669"/>
    <property type="project" value="UniProtKB-KW"/>
</dbReference>
<dbReference type="GO" id="GO:0046933">
    <property type="term" value="F:proton-transporting ATP synthase activity, rotational mechanism"/>
    <property type="evidence" value="ECO:0007669"/>
    <property type="project" value="UniProtKB-UniRule"/>
</dbReference>
<dbReference type="GO" id="GO:0042777">
    <property type="term" value="P:proton motive force-driven plasma membrane ATP synthesis"/>
    <property type="evidence" value="ECO:0007669"/>
    <property type="project" value="TreeGrafter"/>
</dbReference>
<dbReference type="CDD" id="cd00310">
    <property type="entry name" value="ATP-synt_Fo_a_6"/>
    <property type="match status" value="1"/>
</dbReference>
<dbReference type="FunFam" id="1.20.120.220:FF:000006">
    <property type="entry name" value="ATP synthase subunit a"/>
    <property type="match status" value="1"/>
</dbReference>
<dbReference type="Gene3D" id="1.20.120.220">
    <property type="entry name" value="ATP synthase, F0 complex, subunit A"/>
    <property type="match status" value="1"/>
</dbReference>
<dbReference type="HAMAP" id="MF_01393">
    <property type="entry name" value="ATP_synth_a_bact"/>
    <property type="match status" value="1"/>
</dbReference>
<dbReference type="InterPro" id="IPR045082">
    <property type="entry name" value="ATP_syn_F0_a_bact/chloroplast"/>
</dbReference>
<dbReference type="InterPro" id="IPR000568">
    <property type="entry name" value="ATP_synth_F0_asu"/>
</dbReference>
<dbReference type="InterPro" id="IPR023011">
    <property type="entry name" value="ATP_synth_F0_asu_AS"/>
</dbReference>
<dbReference type="InterPro" id="IPR035908">
    <property type="entry name" value="F0_ATP_A_sf"/>
</dbReference>
<dbReference type="NCBIfam" id="TIGR01131">
    <property type="entry name" value="ATP_synt_6_or_A"/>
    <property type="match status" value="1"/>
</dbReference>
<dbReference type="NCBIfam" id="NF004481">
    <property type="entry name" value="PRK05815.2-3"/>
    <property type="match status" value="1"/>
</dbReference>
<dbReference type="PANTHER" id="PTHR42823">
    <property type="entry name" value="ATP SYNTHASE SUBUNIT A, CHLOROPLASTIC"/>
    <property type="match status" value="1"/>
</dbReference>
<dbReference type="PANTHER" id="PTHR42823:SF3">
    <property type="entry name" value="ATP SYNTHASE SUBUNIT A, CHLOROPLASTIC"/>
    <property type="match status" value="1"/>
</dbReference>
<dbReference type="Pfam" id="PF00119">
    <property type="entry name" value="ATP-synt_A"/>
    <property type="match status" value="1"/>
</dbReference>
<dbReference type="PRINTS" id="PR00123">
    <property type="entry name" value="ATPASEA"/>
</dbReference>
<dbReference type="SUPFAM" id="SSF81336">
    <property type="entry name" value="F1F0 ATP synthase subunit A"/>
    <property type="match status" value="1"/>
</dbReference>
<dbReference type="PROSITE" id="PS00449">
    <property type="entry name" value="ATPASE_A"/>
    <property type="match status" value="1"/>
</dbReference>
<proteinExistence type="inferred from homology"/>
<evidence type="ECO:0000255" key="1">
    <source>
        <dbReference type="HAMAP-Rule" id="MF_01393"/>
    </source>
</evidence>